<reference key="1">
    <citation type="journal article" date="2006" name="Proc. Natl. Acad. Sci. U.S.A.">
        <title>The complete genome sequence of a chronic atrophic gastritis Helicobacter pylori strain: evolution during disease progression.</title>
        <authorList>
            <person name="Oh J.D."/>
            <person name="Kling-Baeckhed H."/>
            <person name="Giannakis M."/>
            <person name="Xu J."/>
            <person name="Fulton R.S."/>
            <person name="Fulton L.A."/>
            <person name="Cordum H.S."/>
            <person name="Wang C."/>
            <person name="Elliott G."/>
            <person name="Edwards J."/>
            <person name="Mardis E.R."/>
            <person name="Engstrand L.G."/>
            <person name="Gordon J.I."/>
        </authorList>
    </citation>
    <scope>NUCLEOTIDE SEQUENCE [LARGE SCALE GENOMIC DNA]</scope>
    <source>
        <strain>HPAG1</strain>
    </source>
</reference>
<feature type="chain" id="PRO_1000070785" description="Urease subunit alpha">
    <location>
        <begin position="1"/>
        <end position="238"/>
    </location>
</feature>
<feature type="region of interest" description="Urease gamma">
    <location>
        <begin position="1"/>
        <end position="102"/>
    </location>
</feature>
<feature type="region of interest" description="Urease beta">
    <location>
        <begin position="103"/>
        <end position="238"/>
    </location>
</feature>
<dbReference type="EC" id="3.5.1.5" evidence="1"/>
<dbReference type="EMBL" id="CP000241">
    <property type="protein sequence ID" value="ABF84141.1"/>
    <property type="molecule type" value="Genomic_DNA"/>
</dbReference>
<dbReference type="RefSeq" id="WP_000779223.1">
    <property type="nucleotide sequence ID" value="NC_008086.1"/>
</dbReference>
<dbReference type="SMR" id="Q1CV81"/>
<dbReference type="KEGG" id="hpa:HPAG1_0074"/>
<dbReference type="HOGENOM" id="CLU_000980_3_0_7"/>
<dbReference type="UniPathway" id="UPA00258">
    <property type="reaction ID" value="UER00370"/>
</dbReference>
<dbReference type="GO" id="GO:0035550">
    <property type="term" value="C:urease complex"/>
    <property type="evidence" value="ECO:0007669"/>
    <property type="project" value="InterPro"/>
</dbReference>
<dbReference type="GO" id="GO:0016151">
    <property type="term" value="F:nickel cation binding"/>
    <property type="evidence" value="ECO:0007669"/>
    <property type="project" value="InterPro"/>
</dbReference>
<dbReference type="GO" id="GO:0009039">
    <property type="term" value="F:urease activity"/>
    <property type="evidence" value="ECO:0007669"/>
    <property type="project" value="UniProtKB-UniRule"/>
</dbReference>
<dbReference type="GO" id="GO:0043419">
    <property type="term" value="P:urea catabolic process"/>
    <property type="evidence" value="ECO:0007669"/>
    <property type="project" value="UniProtKB-UniRule"/>
</dbReference>
<dbReference type="CDD" id="cd00407">
    <property type="entry name" value="Urease_beta"/>
    <property type="match status" value="1"/>
</dbReference>
<dbReference type="CDD" id="cd00390">
    <property type="entry name" value="Urease_gamma"/>
    <property type="match status" value="1"/>
</dbReference>
<dbReference type="FunFam" id="3.30.280.10:FF:000001">
    <property type="entry name" value="Urease subunit alpha"/>
    <property type="match status" value="1"/>
</dbReference>
<dbReference type="FunFam" id="2.10.150.10:FF:000001">
    <property type="entry name" value="Urease subunit beta"/>
    <property type="match status" value="1"/>
</dbReference>
<dbReference type="Gene3D" id="2.10.150.10">
    <property type="entry name" value="Urease, beta subunit"/>
    <property type="match status" value="1"/>
</dbReference>
<dbReference type="Gene3D" id="3.30.280.10">
    <property type="entry name" value="Urease, gamma-like subunit"/>
    <property type="match status" value="1"/>
</dbReference>
<dbReference type="HAMAP" id="MF_01954">
    <property type="entry name" value="Urease_beta"/>
    <property type="match status" value="1"/>
</dbReference>
<dbReference type="HAMAP" id="MF_01955">
    <property type="entry name" value="Urease_beta_gamma"/>
    <property type="match status" value="1"/>
</dbReference>
<dbReference type="InterPro" id="IPR002019">
    <property type="entry name" value="Urease_beta-like"/>
</dbReference>
<dbReference type="InterPro" id="IPR036461">
    <property type="entry name" value="Urease_betasu_sf"/>
</dbReference>
<dbReference type="InterPro" id="IPR008223">
    <property type="entry name" value="Urease_gamma-beta_su"/>
</dbReference>
<dbReference type="InterPro" id="IPR002026">
    <property type="entry name" value="Urease_gamma/gamma-beta_su"/>
</dbReference>
<dbReference type="InterPro" id="IPR036463">
    <property type="entry name" value="Urease_gamma_sf"/>
</dbReference>
<dbReference type="InterPro" id="IPR050069">
    <property type="entry name" value="Urease_subunit"/>
</dbReference>
<dbReference type="NCBIfam" id="NF009671">
    <property type="entry name" value="PRK13192.1"/>
    <property type="match status" value="1"/>
</dbReference>
<dbReference type="NCBIfam" id="NF009682">
    <property type="entry name" value="PRK13203.1"/>
    <property type="match status" value="1"/>
</dbReference>
<dbReference type="NCBIfam" id="NF009712">
    <property type="entry name" value="PRK13241.1"/>
    <property type="match status" value="1"/>
</dbReference>
<dbReference type="NCBIfam" id="NF010592">
    <property type="entry name" value="PRK13986.1"/>
    <property type="match status" value="1"/>
</dbReference>
<dbReference type="NCBIfam" id="TIGR00192">
    <property type="entry name" value="urease_beta"/>
    <property type="match status" value="1"/>
</dbReference>
<dbReference type="NCBIfam" id="TIGR00193">
    <property type="entry name" value="urease_gam"/>
    <property type="match status" value="1"/>
</dbReference>
<dbReference type="PANTHER" id="PTHR33569">
    <property type="entry name" value="UREASE"/>
    <property type="match status" value="1"/>
</dbReference>
<dbReference type="PANTHER" id="PTHR33569:SF1">
    <property type="entry name" value="UREASE"/>
    <property type="match status" value="1"/>
</dbReference>
<dbReference type="Pfam" id="PF00699">
    <property type="entry name" value="Urease_beta"/>
    <property type="match status" value="1"/>
</dbReference>
<dbReference type="Pfam" id="PF00547">
    <property type="entry name" value="Urease_gamma"/>
    <property type="match status" value="1"/>
</dbReference>
<dbReference type="PIRSF" id="PIRSF001225">
    <property type="entry name" value="Urease_gammabeta"/>
    <property type="match status" value="1"/>
</dbReference>
<dbReference type="SUPFAM" id="SSF51278">
    <property type="entry name" value="Urease, beta-subunit"/>
    <property type="match status" value="1"/>
</dbReference>
<dbReference type="SUPFAM" id="SSF54111">
    <property type="entry name" value="Urease, gamma-subunit"/>
    <property type="match status" value="1"/>
</dbReference>
<comment type="catalytic activity">
    <reaction evidence="1">
        <text>urea + 2 H2O + H(+) = hydrogencarbonate + 2 NH4(+)</text>
        <dbReference type="Rhea" id="RHEA:20557"/>
        <dbReference type="ChEBI" id="CHEBI:15377"/>
        <dbReference type="ChEBI" id="CHEBI:15378"/>
        <dbReference type="ChEBI" id="CHEBI:16199"/>
        <dbReference type="ChEBI" id="CHEBI:17544"/>
        <dbReference type="ChEBI" id="CHEBI:28938"/>
        <dbReference type="EC" id="3.5.1.5"/>
    </reaction>
</comment>
<comment type="pathway">
    <text evidence="1">Nitrogen metabolism; urea degradation; CO(2) and NH(3) from urea (urease route): step 1/1.</text>
</comment>
<comment type="subunit">
    <text evidence="1">Heterohexamer of 3 UreA (alpha) and 3 UreB (beta) subunits.</text>
</comment>
<comment type="subcellular location">
    <subcellularLocation>
        <location evidence="1">Cytoplasm</location>
    </subcellularLocation>
</comment>
<comment type="similarity">
    <text evidence="1">In the N-terminal section; belongs to the urease gamma subunit family.</text>
</comment>
<comment type="similarity">
    <text evidence="1">In the C-terminal section; belongs to the urease beta subunit family.</text>
</comment>
<comment type="caution">
    <text evidence="2">The orthologous protein is known as the gamma/beta subunit (UreAB) in most other bacteria.</text>
</comment>
<accession>Q1CV81</accession>
<sequence>MKLTPKELDKLMLHYAGELAKKRKEKGIKLNYVEAVALISAHIMEEARAGKKTAAELMQEGRTLLKPDDVMDGVASMIHEVGIEAMFPDGTKLVTVHTPIEANGKLVPGELFLKNEDITINEGKKAVSVKVKNVGDRPVQIGSHFHFFEVNRCLDFDREKTFGKRLDIASGTAVRFEPGEEKSVELIDIGGNRRIFGFNALVDRQADNESKKIALHRAKERGFHGAKSDDNYVKTIKE</sequence>
<gene>
    <name evidence="1" type="primary">ureA</name>
    <name type="ordered locus">HPAG1_0074</name>
</gene>
<evidence type="ECO:0000255" key="1">
    <source>
        <dbReference type="HAMAP-Rule" id="MF_01955"/>
    </source>
</evidence>
<evidence type="ECO:0000305" key="2"/>
<name>URE23_HELPH</name>
<keyword id="KW-0963">Cytoplasm</keyword>
<keyword id="KW-0378">Hydrolase</keyword>
<protein>
    <recommendedName>
        <fullName evidence="1">Urease subunit alpha</fullName>
        <ecNumber evidence="1">3.5.1.5</ecNumber>
    </recommendedName>
    <alternativeName>
        <fullName evidence="1">Urea amidohydrolase subunit alpha</fullName>
    </alternativeName>
</protein>
<proteinExistence type="inferred from homology"/>
<organism>
    <name type="scientific">Helicobacter pylori (strain HPAG1)</name>
    <dbReference type="NCBI Taxonomy" id="357544"/>
    <lineage>
        <taxon>Bacteria</taxon>
        <taxon>Pseudomonadati</taxon>
        <taxon>Campylobacterota</taxon>
        <taxon>Epsilonproteobacteria</taxon>
        <taxon>Campylobacterales</taxon>
        <taxon>Helicobacteraceae</taxon>
        <taxon>Helicobacter</taxon>
    </lineage>
</organism>